<proteinExistence type="evidence at protein level"/>
<comment type="function">
    <text>Required for normal transcription at a number of loci in yeast.</text>
</comment>
<accession>P35209</accession>
<accession>D6W002</accession>
<dbReference type="EMBL" id="L24436">
    <property type="protein sequence ID" value="AAA35078.1"/>
    <property type="molecule type" value="Genomic_DNA"/>
</dbReference>
<dbReference type="EMBL" id="Z49808">
    <property type="protein sequence ID" value="CAA89912.1"/>
    <property type="molecule type" value="Genomic_DNA"/>
</dbReference>
<dbReference type="EMBL" id="BK006946">
    <property type="protein sequence ID" value="DAA10076.1"/>
    <property type="molecule type" value="Genomic_DNA"/>
</dbReference>
<dbReference type="PIR" id="S47866">
    <property type="entry name" value="S47866"/>
</dbReference>
<dbReference type="RefSeq" id="NP_013904.1">
    <property type="nucleotide sequence ID" value="NM_001182685.1"/>
</dbReference>
<dbReference type="BioGRID" id="35357">
    <property type="interactions" value="450"/>
</dbReference>
<dbReference type="DIP" id="DIP-2855N"/>
<dbReference type="FunCoup" id="P35209">
    <property type="interactions" value="257"/>
</dbReference>
<dbReference type="IntAct" id="P35209">
    <property type="interactions" value="8"/>
</dbReference>
<dbReference type="MINT" id="P35209"/>
<dbReference type="STRING" id="4932.YMR179W"/>
<dbReference type="GlyGen" id="P35209">
    <property type="glycosylation" value="1 site"/>
</dbReference>
<dbReference type="iPTMnet" id="P35209"/>
<dbReference type="PaxDb" id="4932-YMR179W"/>
<dbReference type="PeptideAtlas" id="P35209"/>
<dbReference type="EnsemblFungi" id="YMR179W_mRNA">
    <property type="protein sequence ID" value="YMR179W"/>
    <property type="gene ID" value="YMR179W"/>
</dbReference>
<dbReference type="GeneID" id="855217"/>
<dbReference type="KEGG" id="sce:YMR179W"/>
<dbReference type="AGR" id="SGD:S000004791"/>
<dbReference type="SGD" id="S000004791">
    <property type="gene designation" value="SPT21"/>
</dbReference>
<dbReference type="VEuPathDB" id="FungiDB:YMR179W"/>
<dbReference type="eggNOG" id="ENOG502QU3A">
    <property type="taxonomic scope" value="Eukaryota"/>
</dbReference>
<dbReference type="HOGENOM" id="CLU_413915_0_0_1"/>
<dbReference type="InParanoid" id="P35209"/>
<dbReference type="OMA" id="RQTNPMP"/>
<dbReference type="OrthoDB" id="3199820at2759"/>
<dbReference type="BioCyc" id="YEAST:G3O-32867-MONOMER"/>
<dbReference type="BioGRID-ORCS" id="855217">
    <property type="hits" value="1 hit in 10 CRISPR screens"/>
</dbReference>
<dbReference type="PRO" id="PR:P35209"/>
<dbReference type="Proteomes" id="UP000002311">
    <property type="component" value="Chromosome XIII"/>
</dbReference>
<dbReference type="RNAct" id="P35209">
    <property type="molecule type" value="protein"/>
</dbReference>
<dbReference type="GO" id="GO:0000781">
    <property type="term" value="C:chromosome, telomeric region"/>
    <property type="evidence" value="ECO:0007669"/>
    <property type="project" value="GOC"/>
</dbReference>
<dbReference type="GO" id="GO:0005634">
    <property type="term" value="C:nucleus"/>
    <property type="evidence" value="ECO:0007005"/>
    <property type="project" value="SGD"/>
</dbReference>
<dbReference type="GO" id="GO:0000183">
    <property type="term" value="P:rDNA heterochromatin formation"/>
    <property type="evidence" value="ECO:0000315"/>
    <property type="project" value="SGD"/>
</dbReference>
<dbReference type="GO" id="GO:0006357">
    <property type="term" value="P:regulation of transcription by RNA polymerase II"/>
    <property type="evidence" value="ECO:0000315"/>
    <property type="project" value="SGD"/>
</dbReference>
<dbReference type="GO" id="GO:0030466">
    <property type="term" value="P:silent mating-type cassette heterochromatin formation"/>
    <property type="evidence" value="ECO:0000316"/>
    <property type="project" value="SGD"/>
</dbReference>
<dbReference type="GO" id="GO:0031509">
    <property type="term" value="P:subtelomeric heterochromatin formation"/>
    <property type="evidence" value="ECO:0000315"/>
    <property type="project" value="SGD"/>
</dbReference>
<dbReference type="InterPro" id="IPR042403">
    <property type="entry name" value="Spt21/Ams2"/>
</dbReference>
<dbReference type="PANTHER" id="PTHR39147">
    <property type="entry name" value="PROTEIN SPT21"/>
    <property type="match status" value="1"/>
</dbReference>
<dbReference type="PANTHER" id="PTHR39147:SF1">
    <property type="entry name" value="PROTEIN SPT21"/>
    <property type="match status" value="1"/>
</dbReference>
<organism>
    <name type="scientific">Saccharomyces cerevisiae (strain ATCC 204508 / S288c)</name>
    <name type="common">Baker's yeast</name>
    <dbReference type="NCBI Taxonomy" id="559292"/>
    <lineage>
        <taxon>Eukaryota</taxon>
        <taxon>Fungi</taxon>
        <taxon>Dikarya</taxon>
        <taxon>Ascomycota</taxon>
        <taxon>Saccharomycotina</taxon>
        <taxon>Saccharomycetes</taxon>
        <taxon>Saccharomycetales</taxon>
        <taxon>Saccharomycetaceae</taxon>
        <taxon>Saccharomyces</taxon>
    </lineage>
</organism>
<evidence type="ECO:0000256" key="1">
    <source>
        <dbReference type="SAM" id="MobiDB-lite"/>
    </source>
</evidence>
<evidence type="ECO:0007744" key="2">
    <source>
    </source>
</evidence>
<protein>
    <recommendedName>
        <fullName>Protein SPT21</fullName>
    </recommendedName>
</protein>
<keyword id="KW-0597">Phosphoprotein</keyword>
<keyword id="KW-1185">Reference proteome</keyword>
<name>SPT21_YEAST</name>
<sequence>MSELSQMTLKILYTLDNGSNGSYLARSRAPKQVRVANIPSPFPTDSNEQTELRIGAIHLKTILHEIYLNSPEVLDHDTLKDGYDYNLYYRDICEVDEPLVSLGLLSGLRKKFHKNSPYQYTENNIGEEESEERDEVTEEEYEDESFIVTGRVCSNVSALLRRSYSNISNKKGRVVNNQIPEETLEVKLRFTKVITNLRTSGNNTTNSRISCLQMPSSLPSATLPFTPKSQSLFKTNQIKNSRNARTTITINNTNSGTVGRRQTNPMPAPKAVRTQSLPIWNLKPNIANTGFPRNSIAHKIYLADRKTEANQQNNQHQNIAYEINTLQNDNTIQRTKIDDSVSKRFDFMLNKRKSTKKVSPGIATIAKKPASININPKQPPKTSGEKKANDKQTIVKVKNSNSKNSAKSTQAGCRRSSVIEHLNDHDDSILSDILSEPGIEGQKLQQKQKGRKISLTSENDKENIPPQSITSKENKLEGDLDFNAEFPMSDFSDVVFKDEMGWFSNFNCNFFESPTSASASQLNQQNLKPSITLNDPNTCNTIALENEDVSELETAQNNKISLPSDVDKTSPIDSLSIPLIELTHSSSTTNMQRISIKEGSTLNITDSNNATPCDNDIKDRKASVIDSDNTKPQAGLINFSTPADQPASDNNVTASKKLTSMLETQQSKRSHEEVLDEEEEEEALKKQKAIPSSPCGMFNYHQPMELSEDIVEEEQGHNIGDDNESDKTNDLFSTFIHSGIRVSQVVTSPIGEFQSIKH</sequence>
<feature type="chain" id="PRO_0000072162" description="Protein SPT21">
    <location>
        <begin position="1"/>
        <end position="758"/>
    </location>
</feature>
<feature type="region of interest" description="Disordered" evidence="1">
    <location>
        <begin position="251"/>
        <end position="271"/>
    </location>
</feature>
<feature type="region of interest" description="Disordered" evidence="1">
    <location>
        <begin position="372"/>
        <end position="414"/>
    </location>
</feature>
<feature type="region of interest" description="Disordered" evidence="1">
    <location>
        <begin position="438"/>
        <end position="471"/>
    </location>
</feature>
<feature type="region of interest" description="Disordered" evidence="1">
    <location>
        <begin position="624"/>
        <end position="651"/>
    </location>
</feature>
<feature type="compositionally biased region" description="Low complexity" evidence="1">
    <location>
        <begin position="395"/>
        <end position="408"/>
    </location>
</feature>
<feature type="compositionally biased region" description="Polar residues" evidence="1">
    <location>
        <begin position="626"/>
        <end position="651"/>
    </location>
</feature>
<feature type="modified residue" description="Phosphoserine" evidence="2">
    <location>
        <position position="454"/>
    </location>
</feature>
<reference key="1">
    <citation type="journal article" date="1994" name="Genetics">
        <title>The SPT10 and SPT21 genes of Saccharomyces cerevisiae.</title>
        <authorList>
            <person name="Natsoulis G."/>
            <person name="Winston F."/>
            <person name="Boeke J.D."/>
        </authorList>
    </citation>
    <scope>NUCLEOTIDE SEQUENCE [GENOMIC DNA]</scope>
</reference>
<reference key="2">
    <citation type="journal article" date="1997" name="Nature">
        <title>The nucleotide sequence of Saccharomyces cerevisiae chromosome XIII.</title>
        <authorList>
            <person name="Bowman S."/>
            <person name="Churcher C.M."/>
            <person name="Badcock K."/>
            <person name="Brown D."/>
            <person name="Chillingworth T."/>
            <person name="Connor R."/>
            <person name="Dedman K."/>
            <person name="Devlin K."/>
            <person name="Gentles S."/>
            <person name="Hamlin N."/>
            <person name="Hunt S."/>
            <person name="Jagels K."/>
            <person name="Lye G."/>
            <person name="Moule S."/>
            <person name="Odell C."/>
            <person name="Pearson D."/>
            <person name="Rajandream M.A."/>
            <person name="Rice P."/>
            <person name="Skelton J."/>
            <person name="Walsh S.V."/>
            <person name="Whitehead S."/>
            <person name="Barrell B.G."/>
        </authorList>
    </citation>
    <scope>NUCLEOTIDE SEQUENCE [LARGE SCALE GENOMIC DNA]</scope>
    <source>
        <strain>ATCC 204508 / S288c</strain>
    </source>
</reference>
<reference key="3">
    <citation type="journal article" date="2014" name="G3 (Bethesda)">
        <title>The reference genome sequence of Saccharomyces cerevisiae: Then and now.</title>
        <authorList>
            <person name="Engel S.R."/>
            <person name="Dietrich F.S."/>
            <person name="Fisk D.G."/>
            <person name="Binkley G."/>
            <person name="Balakrishnan R."/>
            <person name="Costanzo M.C."/>
            <person name="Dwight S.S."/>
            <person name="Hitz B.C."/>
            <person name="Karra K."/>
            <person name="Nash R.S."/>
            <person name="Weng S."/>
            <person name="Wong E.D."/>
            <person name="Lloyd P."/>
            <person name="Skrzypek M.S."/>
            <person name="Miyasato S.R."/>
            <person name="Simison M."/>
            <person name="Cherry J.M."/>
        </authorList>
    </citation>
    <scope>GENOME REANNOTATION</scope>
    <source>
        <strain>ATCC 204508 / S288c</strain>
    </source>
</reference>
<reference key="4">
    <citation type="journal article" date="2007" name="Proc. Natl. Acad. Sci. U.S.A.">
        <title>Analysis of phosphorylation sites on proteins from Saccharomyces cerevisiae by electron transfer dissociation (ETD) mass spectrometry.</title>
        <authorList>
            <person name="Chi A."/>
            <person name="Huttenhower C."/>
            <person name="Geer L.Y."/>
            <person name="Coon J.J."/>
            <person name="Syka J.E.P."/>
            <person name="Bai D.L."/>
            <person name="Shabanowitz J."/>
            <person name="Burke D.J."/>
            <person name="Troyanskaya O.G."/>
            <person name="Hunt D.F."/>
        </authorList>
    </citation>
    <scope>PHOSPHORYLATION [LARGE SCALE ANALYSIS] AT SER-454</scope>
    <scope>IDENTIFICATION BY MASS SPECTROMETRY [LARGE SCALE ANALYSIS]</scope>
</reference>
<reference key="5">
    <citation type="journal article" date="2008" name="Mol. Cell. Proteomics">
        <title>A multidimensional chromatography technology for in-depth phosphoproteome analysis.</title>
        <authorList>
            <person name="Albuquerque C.P."/>
            <person name="Smolka M.B."/>
            <person name="Payne S.H."/>
            <person name="Bafna V."/>
            <person name="Eng J."/>
            <person name="Zhou H."/>
        </authorList>
    </citation>
    <scope>IDENTIFICATION BY MASS SPECTROMETRY [LARGE SCALE ANALYSIS]</scope>
</reference>
<gene>
    <name type="primary">SPT21</name>
    <name type="ordered locus">YMR179W</name>
    <name type="ORF">YM8010.09</name>
</gene>